<accession>Q5BPS3</accession>
<accession>Q84RJ0</accession>
<accession>Q9SIC2</accession>
<evidence type="ECO:0000250" key="1"/>
<evidence type="ECO:0000269" key="2">
    <source>
    </source>
</evidence>
<evidence type="ECO:0000303" key="3">
    <source>
    </source>
</evidence>
<evidence type="ECO:0000305" key="4"/>
<feature type="chain" id="PRO_0000283391" description="F-box protein DOR">
    <location>
        <begin position="1"/>
        <end position="387"/>
    </location>
</feature>
<feature type="domain" description="F-box">
    <location>
        <begin position="19"/>
        <end position="64"/>
    </location>
</feature>
<feature type="splice variant" id="VSP_036630" description="In isoform 2." evidence="3">
    <location>
        <begin position="185"/>
        <end position="387"/>
    </location>
</feature>
<reference key="1">
    <citation type="journal article" date="1999" name="Nature">
        <title>Sequence and analysis of chromosome 2 of the plant Arabidopsis thaliana.</title>
        <authorList>
            <person name="Lin X."/>
            <person name="Kaul S."/>
            <person name="Rounsley S.D."/>
            <person name="Shea T.P."/>
            <person name="Benito M.-I."/>
            <person name="Town C.D."/>
            <person name="Fujii C.Y."/>
            <person name="Mason T.M."/>
            <person name="Bowman C.L."/>
            <person name="Barnstead M.E."/>
            <person name="Feldblyum T.V."/>
            <person name="Buell C.R."/>
            <person name="Ketchum K.A."/>
            <person name="Lee J.J."/>
            <person name="Ronning C.M."/>
            <person name="Koo H.L."/>
            <person name="Moffat K.S."/>
            <person name="Cronin L.A."/>
            <person name="Shen M."/>
            <person name="Pai G."/>
            <person name="Van Aken S."/>
            <person name="Umayam L."/>
            <person name="Tallon L.J."/>
            <person name="Gill J.E."/>
            <person name="Adams M.D."/>
            <person name="Carrera A.J."/>
            <person name="Creasy T.H."/>
            <person name="Goodman H.M."/>
            <person name="Somerville C.R."/>
            <person name="Copenhaver G.P."/>
            <person name="Preuss D."/>
            <person name="Nierman W.C."/>
            <person name="White O."/>
            <person name="Eisen J.A."/>
            <person name="Salzberg S.L."/>
            <person name="Fraser C.M."/>
            <person name="Venter J.C."/>
        </authorList>
    </citation>
    <scope>NUCLEOTIDE SEQUENCE [LARGE SCALE GENOMIC DNA]</scope>
    <source>
        <strain>cv. Columbia</strain>
    </source>
</reference>
<reference key="2">
    <citation type="journal article" date="2017" name="Plant J.">
        <title>Araport11: a complete reannotation of the Arabidopsis thaliana reference genome.</title>
        <authorList>
            <person name="Cheng C.Y."/>
            <person name="Krishnakumar V."/>
            <person name="Chan A.P."/>
            <person name="Thibaud-Nissen F."/>
            <person name="Schobel S."/>
            <person name="Town C.D."/>
        </authorList>
    </citation>
    <scope>GENOME REANNOTATION</scope>
    <source>
        <strain>cv. Columbia</strain>
    </source>
</reference>
<reference key="3">
    <citation type="submission" date="2005-02" db="EMBL/GenBank/DDBJ databases">
        <authorList>
            <person name="Underwood B.A."/>
            <person name="Xiao Y.-L."/>
            <person name="Moskal W.A. Jr."/>
            <person name="Monaghan E.L."/>
            <person name="Wang W."/>
            <person name="Redman J.C."/>
            <person name="Wu H.C."/>
            <person name="Utterback T."/>
            <person name="Town C.D."/>
        </authorList>
    </citation>
    <scope>NUCLEOTIDE SEQUENCE [LARGE SCALE GENOMIC DNA] (ISOFORM 2)</scope>
    <source>
        <strain>cv. Columbia</strain>
    </source>
</reference>
<reference key="4">
    <citation type="journal article" date="2004" name="Genome Res.">
        <title>Whole genome sequence comparisons and 'full-length' cDNA sequences: a combined approach to evaluate and improve Arabidopsis genome annotation.</title>
        <authorList>
            <person name="Castelli V."/>
            <person name="Aury J.-M."/>
            <person name="Jaillon O."/>
            <person name="Wincker P."/>
            <person name="Clepet C."/>
            <person name="Menard M."/>
            <person name="Cruaud C."/>
            <person name="Quetier F."/>
            <person name="Scarpelli C."/>
            <person name="Schaechter V."/>
            <person name="Temple G."/>
            <person name="Caboche M."/>
            <person name="Weissenbach J."/>
            <person name="Salanoubat M."/>
        </authorList>
    </citation>
    <scope>NUCLEOTIDE SEQUENCE [LARGE SCALE MRNA] (ISOFORM 1)</scope>
    <source>
        <strain>cv. Columbia</strain>
    </source>
</reference>
<reference key="5">
    <citation type="journal article" date="2005" name="Plant Physiol.">
        <title>Analysis of the cDNAs of hypothetical genes on Arabidopsis chromosome 2 reveals numerous transcript variants.</title>
        <authorList>
            <person name="Xiao Y.-L."/>
            <person name="Smith S.R."/>
            <person name="Ishmael N."/>
            <person name="Redman J.C."/>
            <person name="Kumar N."/>
            <person name="Monaghan E.L."/>
            <person name="Ayele M."/>
            <person name="Haas B.J."/>
            <person name="Wu H.C."/>
            <person name="Town C.D."/>
        </authorList>
    </citation>
    <scope>NUCLEOTIDE SEQUENCE [LARGE SCALE MRNA] (ISOFORM 2)</scope>
    <source>
        <strain>cv. Columbia</strain>
    </source>
</reference>
<reference key="6">
    <citation type="journal article" date="2008" name="Plant Physiol.">
        <title>F-box protein DOR functions as a novel inhibitory factor for abscisic acid-induced stomatal closure under drought stress in Arabidopsis.</title>
        <authorList>
            <person name="Zhang Y."/>
            <person name="Xu W."/>
            <person name="Li Z."/>
            <person name="Deng X.W."/>
            <person name="Wu W."/>
            <person name="Xue Y."/>
        </authorList>
    </citation>
    <scope>FUNCTION</scope>
    <scope>TISSUE SPECIFICITY</scope>
    <scope>INDUCTION</scope>
    <scope>DISRUPTION PHENOTYPE</scope>
    <scope>INTERACTION WITH ASK14 AND CUL1</scope>
</reference>
<organism>
    <name type="scientific">Arabidopsis thaliana</name>
    <name type="common">Mouse-ear cress</name>
    <dbReference type="NCBI Taxonomy" id="3702"/>
    <lineage>
        <taxon>Eukaryota</taxon>
        <taxon>Viridiplantae</taxon>
        <taxon>Streptophyta</taxon>
        <taxon>Embryophyta</taxon>
        <taxon>Tracheophyta</taxon>
        <taxon>Spermatophyta</taxon>
        <taxon>Magnoliopsida</taxon>
        <taxon>eudicotyledons</taxon>
        <taxon>Gunneridae</taxon>
        <taxon>Pentapetalae</taxon>
        <taxon>rosids</taxon>
        <taxon>malvids</taxon>
        <taxon>Brassicales</taxon>
        <taxon>Brassicaceae</taxon>
        <taxon>Camelineae</taxon>
        <taxon>Arabidopsis</taxon>
    </lineage>
</organism>
<dbReference type="EMBL" id="AC007169">
    <property type="protein sequence ID" value="AAD26472.1"/>
    <property type="status" value="ALT_SEQ"/>
    <property type="molecule type" value="Genomic_DNA"/>
</dbReference>
<dbReference type="EMBL" id="CP002685">
    <property type="protein sequence ID" value="AEC08552.1"/>
    <property type="molecule type" value="Genomic_DNA"/>
</dbReference>
<dbReference type="EMBL" id="AY924755">
    <property type="protein sequence ID" value="AAX23830.1"/>
    <property type="molecule type" value="Genomic_DNA"/>
</dbReference>
<dbReference type="EMBL" id="BX821031">
    <property type="status" value="NOT_ANNOTATED_CDS"/>
    <property type="molecule type" value="mRNA"/>
</dbReference>
<dbReference type="EMBL" id="AY231430">
    <property type="protein sequence ID" value="AAO86858.1"/>
    <property type="molecule type" value="mRNA"/>
</dbReference>
<dbReference type="PIR" id="B84721">
    <property type="entry name" value="B84721"/>
</dbReference>
<dbReference type="RefSeq" id="NP_180705.1">
    <molecule id="Q5BPS3-1"/>
    <property type="nucleotide sequence ID" value="NM_128704.2"/>
</dbReference>
<dbReference type="SMR" id="Q5BPS3"/>
<dbReference type="BioGRID" id="3052">
    <property type="interactions" value="1"/>
</dbReference>
<dbReference type="FunCoup" id="Q5BPS3">
    <property type="interactions" value="53"/>
</dbReference>
<dbReference type="IntAct" id="Q5BPS3">
    <property type="interactions" value="2"/>
</dbReference>
<dbReference type="STRING" id="3702.Q5BPS3"/>
<dbReference type="PaxDb" id="3702-AT2G31470.1"/>
<dbReference type="EnsemblPlants" id="AT2G31470.1">
    <molecule id="Q5BPS3-1"/>
    <property type="protein sequence ID" value="AT2G31470.1"/>
    <property type="gene ID" value="AT2G31470"/>
</dbReference>
<dbReference type="GeneID" id="817705"/>
<dbReference type="Gramene" id="AT2G31470.1">
    <molecule id="Q5BPS3-1"/>
    <property type="protein sequence ID" value="AT2G31470.1"/>
    <property type="gene ID" value="AT2G31470"/>
</dbReference>
<dbReference type="KEGG" id="ath:AT2G31470"/>
<dbReference type="Araport" id="AT2G31470"/>
<dbReference type="TAIR" id="AT2G31470">
    <property type="gene designation" value="DOR"/>
</dbReference>
<dbReference type="eggNOG" id="ENOG502SNHU">
    <property type="taxonomic scope" value="Eukaryota"/>
</dbReference>
<dbReference type="HOGENOM" id="CLU_027176_8_1_1"/>
<dbReference type="InParanoid" id="Q5BPS3"/>
<dbReference type="OMA" id="SPRYNDV"/>
<dbReference type="PhylomeDB" id="Q5BPS3"/>
<dbReference type="UniPathway" id="UPA00143"/>
<dbReference type="PRO" id="PR:Q5BPS3"/>
<dbReference type="Proteomes" id="UP000006548">
    <property type="component" value="Chromosome 2"/>
</dbReference>
<dbReference type="ExpressionAtlas" id="Q5BPS3">
    <property type="expression patterns" value="baseline and differential"/>
</dbReference>
<dbReference type="GO" id="GO:0009738">
    <property type="term" value="P:abscisic acid-activated signaling pathway"/>
    <property type="evidence" value="ECO:0007669"/>
    <property type="project" value="UniProtKB-KW"/>
</dbReference>
<dbReference type="GO" id="GO:0042631">
    <property type="term" value="P:cellular response to water deprivation"/>
    <property type="evidence" value="ECO:0000315"/>
    <property type="project" value="UniProtKB"/>
</dbReference>
<dbReference type="GO" id="GO:0009788">
    <property type="term" value="P:negative regulation of abscisic acid-activated signaling pathway"/>
    <property type="evidence" value="ECO:0000315"/>
    <property type="project" value="UniProtKB"/>
</dbReference>
<dbReference type="GO" id="GO:0016567">
    <property type="term" value="P:protein ubiquitination"/>
    <property type="evidence" value="ECO:0007669"/>
    <property type="project" value="UniProtKB-UniPathway"/>
</dbReference>
<dbReference type="GO" id="GO:0010119">
    <property type="term" value="P:regulation of stomatal movement"/>
    <property type="evidence" value="ECO:0000315"/>
    <property type="project" value="TAIR"/>
</dbReference>
<dbReference type="GO" id="GO:0009737">
    <property type="term" value="P:response to abscisic acid"/>
    <property type="evidence" value="ECO:0000315"/>
    <property type="project" value="TAIR"/>
</dbReference>
<dbReference type="GO" id="GO:0009414">
    <property type="term" value="P:response to water deprivation"/>
    <property type="evidence" value="ECO:0000315"/>
    <property type="project" value="TAIR"/>
</dbReference>
<dbReference type="GO" id="GO:0010118">
    <property type="term" value="P:stomatal movement"/>
    <property type="evidence" value="ECO:0000315"/>
    <property type="project" value="UniProtKB"/>
</dbReference>
<dbReference type="CDD" id="cd22157">
    <property type="entry name" value="F-box_AtFBW1-like"/>
    <property type="match status" value="1"/>
</dbReference>
<dbReference type="Gene3D" id="1.20.1280.50">
    <property type="match status" value="1"/>
</dbReference>
<dbReference type="InterPro" id="IPR013187">
    <property type="entry name" value="F-box-assoc_dom_typ3"/>
</dbReference>
<dbReference type="InterPro" id="IPR017451">
    <property type="entry name" value="F-box-assoc_interact_dom"/>
</dbReference>
<dbReference type="InterPro" id="IPR036047">
    <property type="entry name" value="F-box-like_dom_sf"/>
</dbReference>
<dbReference type="InterPro" id="IPR001810">
    <property type="entry name" value="F-box_dom"/>
</dbReference>
<dbReference type="NCBIfam" id="TIGR01640">
    <property type="entry name" value="F_box_assoc_1"/>
    <property type="match status" value="1"/>
</dbReference>
<dbReference type="PANTHER" id="PTHR31111">
    <property type="entry name" value="BNAA05G37150D PROTEIN-RELATED"/>
    <property type="match status" value="1"/>
</dbReference>
<dbReference type="PANTHER" id="PTHR31111:SF99">
    <property type="entry name" value="F-BOX PROTEIN DOR"/>
    <property type="match status" value="1"/>
</dbReference>
<dbReference type="Pfam" id="PF00646">
    <property type="entry name" value="F-box"/>
    <property type="match status" value="1"/>
</dbReference>
<dbReference type="Pfam" id="PF08268">
    <property type="entry name" value="FBA_3"/>
    <property type="match status" value="1"/>
</dbReference>
<dbReference type="SMART" id="SM00256">
    <property type="entry name" value="FBOX"/>
    <property type="match status" value="1"/>
</dbReference>
<dbReference type="SUPFAM" id="SSF81383">
    <property type="entry name" value="F-box domain"/>
    <property type="match status" value="1"/>
</dbReference>
<gene>
    <name type="primary">DOR</name>
    <name type="ordered locus">At2g31470</name>
    <name type="ORF">T28P16.4</name>
</gene>
<proteinExistence type="evidence at protein level"/>
<comment type="function">
    <text evidence="1 2">Component of SCF(ASK-cullin-F-box) E3 ubiquitin ligase complexes, which may mediate the ubiquitination and subsequent proteasomal degradation of target proteins (By similarity). Negative regulator of guard cell abscisic acid (ABA) signaling, especially during drought stress.</text>
</comment>
<comment type="pathway">
    <text>Protein modification; protein ubiquitination.</text>
</comment>
<comment type="subunit">
    <text evidence="1 2">Part of a SCF (ASK-cullin-F-box) protein ligase complex (By similarity). Interacts with ASK14 and CUL1.</text>
</comment>
<comment type="alternative products">
    <event type="alternative splicing"/>
    <isoform>
        <id>Q5BPS3-1</id>
        <name>1</name>
        <sequence type="displayed"/>
    </isoform>
    <isoform>
        <id>Q5BPS3-2</id>
        <name>2</name>
        <sequence type="described" ref="VSP_036630"/>
    </isoform>
</comment>
<comment type="tissue specificity">
    <text evidence="2">Strongly expressed in guard cells. Mostly represented in seedlings, leaves and flowers, and, to a lower extent, in roots and siliques.</text>
</comment>
<comment type="induction">
    <text evidence="2">Repressed by ABA.</text>
</comment>
<comment type="domain">
    <text evidence="1">The F-box is necessary for the interaction with ASK proteins.</text>
</comment>
<comment type="disruption phenotype">
    <text evidence="2">Hypersensitive ABA response of stomatal closing and substantial increase of drought tolerance.</text>
</comment>
<comment type="sequence caution" evidence="4">
    <conflict type="erroneous gene model prediction">
        <sequence resource="EMBL-CDS" id="AAD26472"/>
    </conflict>
</comment>
<comment type="sequence caution" evidence="4">
    <conflict type="miscellaneous discrepancy">
        <sequence resource="EMBL" id="BX821031"/>
    </conflict>
    <text>Sequencing errors.</text>
</comment>
<name>DOR_ARATH</name>
<sequence length="387" mass="44770">MKSRRQNVSVARQTILGRDENFEPIPIDLVIEIFSRSPVKSIARCRCVSKLWASILRLPYFTELYLTKSCARPRLLFACQKHRELFFFSTPQPHNPNESSSPLAASFHMKIPFDGRFNIISPIGGLVFVRYEQILKGRKTPEFVSAICNPSTGQSLTLPKPKTRKRIWGTSHFGYDPIEKQFKVLSMNIGDGVYKEHYVLTLGTENLSWRRIECSIPHVHGSKGICINGVLYYRAKADMFSGTLMIVCFDVRFEKFSYIKILKPTTTLISYNGKLASLVWEGPSYICGKRFEMWVLGDPEKHEWLKHTYELRPRWQNVLGEDLLIFAGMTGTNEIVLSPKYPSHPFYVFYYNLERNTIRRVEIQGMGAFKVNEDYIFLDHVEDVKLI</sequence>
<protein>
    <recommendedName>
        <fullName>F-box protein DOR</fullName>
    </recommendedName>
    <alternativeName>
        <fullName>Protein DROUGHT TOLERANCE REPRESSOR</fullName>
    </alternativeName>
</protein>
<keyword id="KW-0938">Abscisic acid signaling pathway</keyword>
<keyword id="KW-0025">Alternative splicing</keyword>
<keyword id="KW-1185">Reference proteome</keyword>
<keyword id="KW-0833">Ubl conjugation pathway</keyword>